<sequence>MTLDISKYPTLALAETPDELRLLPKETLPTLCDELRTYLLNSVSQSSGHLASGLGTVELTVALHYVYNTPFDQLIWDVGHQAYPHKILTGRREQMPTIRQKGGLHPFPWREESEYDTLSVGHSSTSISAALGMAICAEKEGQNRKVVSVIGDGAITAGMAFEAMNHAGDVHSDMLVILNDNEMSISENVGALNNHLARVLSGNLYTSIREGGKKVLSGVPPIKELVRRTEEHLKGMVVPGTLFEELGFNYIGPIDGHDVVELVKTLKNMRELKGPQFLHIMTKKGKGYEPAEKDPIGYHGVPKFDPAHNSLPKSSGGKPSFSNIFGDFLCDMAAQDPKLMAITPAMREGSGMVRFSKEYPEQYFDVAIAEQHAVTLATGMAIGGYNPIVAIYSTFLQRGYDQLIHDVAIMNLPVMFAIDRAGLVGADGQTHQGAFDLSYMRCIPNMVIMAPSDENECRQMLYTGHKHQGPSAVRYPRGNGMGTPIESEFTALEIGKGRLVRQGEKVAILSFGTFLANALEAAEALNATVADMRFVKPLDEALLRQLANEHDVLITIEENAIAGGAGAGVIEFMMQEKIMKPVLNLGLPDKFIHQGTQEELHEELGLDAKGIEQAIRHYLAK</sequence>
<reference key="1">
    <citation type="submission" date="2002-12" db="EMBL/GenBank/DDBJ databases">
        <title>Complete genome sequence of Vibrio vulnificus CMCP6.</title>
        <authorList>
            <person name="Rhee J.H."/>
            <person name="Kim S.Y."/>
            <person name="Chung S.S."/>
            <person name="Kim J.J."/>
            <person name="Moon Y.H."/>
            <person name="Jeong H."/>
            <person name="Choy H.E."/>
        </authorList>
    </citation>
    <scope>NUCLEOTIDE SEQUENCE [LARGE SCALE GENOMIC DNA]</scope>
    <source>
        <strain>CMCP6</strain>
    </source>
</reference>
<dbReference type="EC" id="2.2.1.7" evidence="1"/>
<dbReference type="EMBL" id="AE016795">
    <property type="protein sequence ID" value="AAO08845.1"/>
    <property type="molecule type" value="Genomic_DNA"/>
</dbReference>
<dbReference type="RefSeq" id="WP_011078420.1">
    <property type="nucleotide sequence ID" value="NC_004459.3"/>
</dbReference>
<dbReference type="SMR" id="Q8DFA3"/>
<dbReference type="KEGG" id="vvu:VV1_0315"/>
<dbReference type="HOGENOM" id="CLU_009227_1_4_6"/>
<dbReference type="UniPathway" id="UPA00064">
    <property type="reaction ID" value="UER00091"/>
</dbReference>
<dbReference type="Proteomes" id="UP000002275">
    <property type="component" value="Chromosome 1"/>
</dbReference>
<dbReference type="GO" id="GO:0005829">
    <property type="term" value="C:cytosol"/>
    <property type="evidence" value="ECO:0007669"/>
    <property type="project" value="TreeGrafter"/>
</dbReference>
<dbReference type="GO" id="GO:0008661">
    <property type="term" value="F:1-deoxy-D-xylulose-5-phosphate synthase activity"/>
    <property type="evidence" value="ECO:0007669"/>
    <property type="project" value="UniProtKB-UniRule"/>
</dbReference>
<dbReference type="GO" id="GO:0000287">
    <property type="term" value="F:magnesium ion binding"/>
    <property type="evidence" value="ECO:0007669"/>
    <property type="project" value="UniProtKB-UniRule"/>
</dbReference>
<dbReference type="GO" id="GO:0030976">
    <property type="term" value="F:thiamine pyrophosphate binding"/>
    <property type="evidence" value="ECO:0007669"/>
    <property type="project" value="UniProtKB-UniRule"/>
</dbReference>
<dbReference type="GO" id="GO:0052865">
    <property type="term" value="P:1-deoxy-D-xylulose 5-phosphate biosynthetic process"/>
    <property type="evidence" value="ECO:0007669"/>
    <property type="project" value="UniProtKB-UniPathway"/>
</dbReference>
<dbReference type="GO" id="GO:0019288">
    <property type="term" value="P:isopentenyl diphosphate biosynthetic process, methylerythritol 4-phosphate pathway"/>
    <property type="evidence" value="ECO:0007669"/>
    <property type="project" value="TreeGrafter"/>
</dbReference>
<dbReference type="GO" id="GO:0016114">
    <property type="term" value="P:terpenoid biosynthetic process"/>
    <property type="evidence" value="ECO:0007669"/>
    <property type="project" value="UniProtKB-UniRule"/>
</dbReference>
<dbReference type="GO" id="GO:0009228">
    <property type="term" value="P:thiamine biosynthetic process"/>
    <property type="evidence" value="ECO:0007669"/>
    <property type="project" value="UniProtKB-UniRule"/>
</dbReference>
<dbReference type="CDD" id="cd02007">
    <property type="entry name" value="TPP_DXS"/>
    <property type="match status" value="1"/>
</dbReference>
<dbReference type="CDD" id="cd07033">
    <property type="entry name" value="TPP_PYR_DXS_TK_like"/>
    <property type="match status" value="1"/>
</dbReference>
<dbReference type="FunFam" id="3.40.50.920:FF:000002">
    <property type="entry name" value="1-deoxy-D-xylulose-5-phosphate synthase"/>
    <property type="match status" value="1"/>
</dbReference>
<dbReference type="FunFam" id="3.40.50.970:FF:000005">
    <property type="entry name" value="1-deoxy-D-xylulose-5-phosphate synthase"/>
    <property type="match status" value="1"/>
</dbReference>
<dbReference type="Gene3D" id="3.40.50.920">
    <property type="match status" value="1"/>
</dbReference>
<dbReference type="Gene3D" id="3.40.50.970">
    <property type="match status" value="2"/>
</dbReference>
<dbReference type="HAMAP" id="MF_00315">
    <property type="entry name" value="DXP_synth"/>
    <property type="match status" value="1"/>
</dbReference>
<dbReference type="InterPro" id="IPR005477">
    <property type="entry name" value="Dxylulose-5-P_synthase"/>
</dbReference>
<dbReference type="InterPro" id="IPR029061">
    <property type="entry name" value="THDP-binding"/>
</dbReference>
<dbReference type="InterPro" id="IPR009014">
    <property type="entry name" value="Transketo_C/PFOR_II"/>
</dbReference>
<dbReference type="InterPro" id="IPR005475">
    <property type="entry name" value="Transketolase-like_Pyr-bd"/>
</dbReference>
<dbReference type="InterPro" id="IPR020826">
    <property type="entry name" value="Transketolase_BS"/>
</dbReference>
<dbReference type="InterPro" id="IPR033248">
    <property type="entry name" value="Transketolase_C"/>
</dbReference>
<dbReference type="InterPro" id="IPR049557">
    <property type="entry name" value="Transketolase_CS"/>
</dbReference>
<dbReference type="NCBIfam" id="TIGR00204">
    <property type="entry name" value="dxs"/>
    <property type="match status" value="1"/>
</dbReference>
<dbReference type="NCBIfam" id="NF003933">
    <property type="entry name" value="PRK05444.2-2"/>
    <property type="match status" value="1"/>
</dbReference>
<dbReference type="PANTHER" id="PTHR43322">
    <property type="entry name" value="1-D-DEOXYXYLULOSE 5-PHOSPHATE SYNTHASE-RELATED"/>
    <property type="match status" value="1"/>
</dbReference>
<dbReference type="PANTHER" id="PTHR43322:SF5">
    <property type="entry name" value="1-DEOXY-D-XYLULOSE-5-PHOSPHATE SYNTHASE, CHLOROPLASTIC"/>
    <property type="match status" value="1"/>
</dbReference>
<dbReference type="Pfam" id="PF13292">
    <property type="entry name" value="DXP_synthase_N"/>
    <property type="match status" value="1"/>
</dbReference>
<dbReference type="Pfam" id="PF02779">
    <property type="entry name" value="Transket_pyr"/>
    <property type="match status" value="1"/>
</dbReference>
<dbReference type="Pfam" id="PF02780">
    <property type="entry name" value="Transketolase_C"/>
    <property type="match status" value="1"/>
</dbReference>
<dbReference type="SMART" id="SM00861">
    <property type="entry name" value="Transket_pyr"/>
    <property type="match status" value="1"/>
</dbReference>
<dbReference type="SUPFAM" id="SSF52518">
    <property type="entry name" value="Thiamin diphosphate-binding fold (THDP-binding)"/>
    <property type="match status" value="2"/>
</dbReference>
<dbReference type="SUPFAM" id="SSF52922">
    <property type="entry name" value="TK C-terminal domain-like"/>
    <property type="match status" value="1"/>
</dbReference>
<dbReference type="PROSITE" id="PS00801">
    <property type="entry name" value="TRANSKETOLASE_1"/>
    <property type="match status" value="1"/>
</dbReference>
<dbReference type="PROSITE" id="PS00802">
    <property type="entry name" value="TRANSKETOLASE_2"/>
    <property type="match status" value="1"/>
</dbReference>
<proteinExistence type="inferred from homology"/>
<gene>
    <name evidence="1" type="primary">dxs</name>
    <name type="ordered locus">VV1_0315</name>
</gene>
<evidence type="ECO:0000255" key="1">
    <source>
        <dbReference type="HAMAP-Rule" id="MF_00315"/>
    </source>
</evidence>
<protein>
    <recommendedName>
        <fullName evidence="1">1-deoxy-D-xylulose-5-phosphate synthase</fullName>
        <ecNumber evidence="1">2.2.1.7</ecNumber>
    </recommendedName>
    <alternativeName>
        <fullName evidence="1">1-deoxyxylulose-5-phosphate synthase</fullName>
        <shortName evidence="1">DXP synthase</shortName>
        <shortName evidence="1">DXPS</shortName>
    </alternativeName>
</protein>
<organism>
    <name type="scientific">Vibrio vulnificus (strain CMCP6)</name>
    <dbReference type="NCBI Taxonomy" id="216895"/>
    <lineage>
        <taxon>Bacteria</taxon>
        <taxon>Pseudomonadati</taxon>
        <taxon>Pseudomonadota</taxon>
        <taxon>Gammaproteobacteria</taxon>
        <taxon>Vibrionales</taxon>
        <taxon>Vibrionaceae</taxon>
        <taxon>Vibrio</taxon>
    </lineage>
</organism>
<accession>Q8DFA3</accession>
<name>DXS_VIBVU</name>
<keyword id="KW-0414">Isoprene biosynthesis</keyword>
<keyword id="KW-0460">Magnesium</keyword>
<keyword id="KW-0479">Metal-binding</keyword>
<keyword id="KW-0784">Thiamine biosynthesis</keyword>
<keyword id="KW-0786">Thiamine pyrophosphate</keyword>
<keyword id="KW-0808">Transferase</keyword>
<feature type="chain" id="PRO_0000189171" description="1-deoxy-D-xylulose-5-phosphate synthase">
    <location>
        <begin position="1"/>
        <end position="621"/>
    </location>
</feature>
<feature type="binding site" evidence="1">
    <location>
        <position position="80"/>
    </location>
    <ligand>
        <name>thiamine diphosphate</name>
        <dbReference type="ChEBI" id="CHEBI:58937"/>
    </ligand>
</feature>
<feature type="binding site" evidence="1">
    <location>
        <begin position="121"/>
        <end position="123"/>
    </location>
    <ligand>
        <name>thiamine diphosphate</name>
        <dbReference type="ChEBI" id="CHEBI:58937"/>
    </ligand>
</feature>
<feature type="binding site" evidence="1">
    <location>
        <position position="152"/>
    </location>
    <ligand>
        <name>Mg(2+)</name>
        <dbReference type="ChEBI" id="CHEBI:18420"/>
    </ligand>
</feature>
<feature type="binding site" evidence="1">
    <location>
        <begin position="153"/>
        <end position="154"/>
    </location>
    <ligand>
        <name>thiamine diphosphate</name>
        <dbReference type="ChEBI" id="CHEBI:58937"/>
    </ligand>
</feature>
<feature type="binding site" evidence="1">
    <location>
        <position position="181"/>
    </location>
    <ligand>
        <name>Mg(2+)</name>
        <dbReference type="ChEBI" id="CHEBI:18420"/>
    </ligand>
</feature>
<feature type="binding site" evidence="1">
    <location>
        <position position="181"/>
    </location>
    <ligand>
        <name>thiamine diphosphate</name>
        <dbReference type="ChEBI" id="CHEBI:58937"/>
    </ligand>
</feature>
<feature type="binding site" evidence="1">
    <location>
        <position position="288"/>
    </location>
    <ligand>
        <name>thiamine diphosphate</name>
        <dbReference type="ChEBI" id="CHEBI:58937"/>
    </ligand>
</feature>
<feature type="binding site" evidence="1">
    <location>
        <position position="370"/>
    </location>
    <ligand>
        <name>thiamine diphosphate</name>
        <dbReference type="ChEBI" id="CHEBI:58937"/>
    </ligand>
</feature>
<comment type="function">
    <text evidence="1">Catalyzes the acyloin condensation reaction between C atoms 2 and 3 of pyruvate and glyceraldehyde 3-phosphate to yield 1-deoxy-D-xylulose-5-phosphate (DXP).</text>
</comment>
<comment type="catalytic activity">
    <reaction evidence="1">
        <text>D-glyceraldehyde 3-phosphate + pyruvate + H(+) = 1-deoxy-D-xylulose 5-phosphate + CO2</text>
        <dbReference type="Rhea" id="RHEA:12605"/>
        <dbReference type="ChEBI" id="CHEBI:15361"/>
        <dbReference type="ChEBI" id="CHEBI:15378"/>
        <dbReference type="ChEBI" id="CHEBI:16526"/>
        <dbReference type="ChEBI" id="CHEBI:57792"/>
        <dbReference type="ChEBI" id="CHEBI:59776"/>
        <dbReference type="EC" id="2.2.1.7"/>
    </reaction>
</comment>
<comment type="cofactor">
    <cofactor evidence="1">
        <name>Mg(2+)</name>
        <dbReference type="ChEBI" id="CHEBI:18420"/>
    </cofactor>
    <text evidence="1">Binds 1 Mg(2+) ion per subunit.</text>
</comment>
<comment type="cofactor">
    <cofactor evidence="1">
        <name>thiamine diphosphate</name>
        <dbReference type="ChEBI" id="CHEBI:58937"/>
    </cofactor>
    <text evidence="1">Binds 1 thiamine pyrophosphate per subunit.</text>
</comment>
<comment type="pathway">
    <text evidence="1">Metabolic intermediate biosynthesis; 1-deoxy-D-xylulose 5-phosphate biosynthesis; 1-deoxy-D-xylulose 5-phosphate from D-glyceraldehyde 3-phosphate and pyruvate: step 1/1.</text>
</comment>
<comment type="subunit">
    <text evidence="1">Homodimer.</text>
</comment>
<comment type="similarity">
    <text evidence="1">Belongs to the transketolase family. DXPS subfamily.</text>
</comment>